<accession>Q8N1B4</accession>
<accession>A2BF38</accession>
<accession>B0UZZ4</accession>
<accession>B4DNI9</accession>
<accession>Q53GR4</accession>
<accession>Q5JPA0</accession>
<accession>Q5SQW1</accession>
<accession>Q8IUN6</accession>
<accession>Q9NPT5</accession>
<name>VPS52_HUMAN</name>
<proteinExistence type="evidence at protein level"/>
<sequence>MAAAATMAAAARELVLRAGTSDMEEEEGPLAGGPGLQEPLQLGELDITSDEFILDEVDVHIQANLEDELVKEALKTGVDLRHYSKQVELELQQIEQKSIRDYIQESENIASLHNQITACDAVLERMEQMLGAFQSDLSSISSEIRTLQEQSGAMNIRLRNRQAVRGKLGELVDGLVVPSALVTAILEAPVTEPRFLEQLQELDAKAAAVREQEARGTAACADVRGVLDRLRVKAVTKIREFILQKIYSFRKPMTNYQIPQTALLKYRFFYQFLLGNERATAKEIRDEYVETLSKIYLSYYRSYLGRLMKVQYEEVAEKDDLMGVEDTAKKGFFSKPSLRSRNTIFTLGTRGSVISPTELEAPILVPHTAQRGEQRYPFEALFRSQHYALLDNSCREYLFICEFFVVSGPAAHDLFHAVMGRTLSMTLKHLDSYLADCYDAIAVFLCIHIVLRFRNIAAKRDVPALDRYWEQVLALLWPRFELILEMNVQSVRSTDPQRLGGLDTRPHYITRRYAEFSSALVSINQTIPNERTMQLLGQLQVEVENFVLRVAAEFSSRKEQLVFLINNYDMMLGVLMERAADDSKEVESFQQLLNARTQEFIEELLSPPFGGLVAFVKEAEALIERGQAERLRGEEARVTQLIRGFGSSWKSSVESLSQDVMRSFTNFRNGTSIIQGALTQLIQLYHRFHRVLSQPQLRALPARAELINIHHLMVELKKHKPNF</sequence>
<comment type="function">
    <text evidence="2 3 6">Acts as a component of the GARP complex that is involved in retrograde transport from early and late endosomes to the trans-Golgi network (TGN). The GARP complex is required for the maintenance of the cycling of mannose 6-phosphate receptors between the TGN and endosomes, this cycling is necessary for proper lysosomal sorting of acid hydrolases such as CTSD (PubMed:15878329, PubMed:18367545). Acts as a component of the EARP complex that is involved in endocytic recycling. The EARP complex associates with Rab4-positive endosomes and promotes recycling of internalized transferrin receptor (TFRC) to the plasma membrane (PubMed:25799061).</text>
</comment>
<comment type="subunit">
    <text evidence="2 4 5 6 7">Component of the Golgi-associated retrograde protein (GARP) complex, also called VFT (VPS fifty-three) complex, composed of VPS51, VPS52, VPS53 and VPS54 (PubMed:15878329, PubMed:20685960, PubMed:27440922). Component of the endosome-associated retrograde protein (EARP) complex, composed of VPS51, VPS52, VPS53 and VPS50/Syndetin (PubMed:25799061, PubMed:27440922). EIPR1 interacts with both EARP and GARP complexes and mediates the recruitment of the GARP complex to the trans-Golgi network (PubMed:27440922). Interacts with RAB6A and STX10 (PubMed:15878329, PubMed:20685960). Interacts with BLTP3B (PubMed:20163565).</text>
</comment>
<comment type="interaction">
    <interactant intactId="EBI-2799833">
        <id>Q8N1B4</id>
    </interactant>
    <interactant intactId="EBI-10176499">
        <id>C9JG97</id>
        <label>AAMP</label>
    </interactant>
    <organismsDiffer>false</organismsDiffer>
    <experiments>3</experiments>
</comment>
<comment type="interaction">
    <interactant intactId="EBI-2799833">
        <id>Q8N1B4</id>
    </interactant>
    <interactant intactId="EBI-8643161">
        <id>Q9NX04</id>
        <label>AIRIM</label>
    </interactant>
    <organismsDiffer>false</organismsDiffer>
    <experiments>6</experiments>
</comment>
<comment type="interaction">
    <interactant intactId="EBI-2799833">
        <id>Q8N1B4</id>
    </interactant>
    <interactant intactId="EBI-10253919">
        <id>Q6PJ05</id>
        <label>ATP6V1D</label>
    </interactant>
    <organismsDiffer>false</organismsDiffer>
    <experiments>3</experiments>
</comment>
<comment type="interaction">
    <interactant intactId="EBI-2799833">
        <id>Q8N1B4</id>
    </interactant>
    <interactant intactId="EBI-10266952">
        <id>Q8N5Z9</id>
        <label>ATP6V1D</label>
    </interactant>
    <organismsDiffer>false</organismsDiffer>
    <experiments>3</experiments>
</comment>
<comment type="interaction">
    <interactant intactId="EBI-2799833">
        <id>Q8N1B4</id>
    </interactant>
    <interactant intactId="EBI-2684998">
        <id>Q9Y5K8</id>
        <label>ATP6V1D</label>
    </interactant>
    <organismsDiffer>false</organismsDiffer>
    <experiments>6</experiments>
</comment>
<comment type="interaction">
    <interactant intactId="EBI-2799833">
        <id>Q8N1B4</id>
    </interactant>
    <interactant intactId="EBI-10193358">
        <id>Q96GS4</id>
        <label>BORCS6</label>
    </interactant>
    <organismsDiffer>false</organismsDiffer>
    <experiments>3</experiments>
</comment>
<comment type="interaction">
    <interactant intactId="EBI-2799833">
        <id>Q8N1B4</id>
    </interactant>
    <interactant intactId="EBI-358049">
        <id>Q13895</id>
        <label>BYSL</label>
    </interactant>
    <organismsDiffer>false</organismsDiffer>
    <experiments>3</experiments>
</comment>
<comment type="interaction">
    <interactant intactId="EBI-2799833">
        <id>Q8N1B4</id>
    </interactant>
    <interactant intactId="EBI-747505">
        <id>Q8TAB5</id>
        <label>C1orf216</label>
    </interactant>
    <organismsDiffer>false</organismsDiffer>
    <experiments>3</experiments>
</comment>
<comment type="interaction">
    <interactant intactId="EBI-2799833">
        <id>Q8N1B4</id>
    </interactant>
    <interactant intactId="EBI-739879">
        <id>Q53TS8</id>
        <label>C2CD6</label>
    </interactant>
    <organismsDiffer>false</organismsDiffer>
    <experiments>3</experiments>
</comment>
<comment type="interaction">
    <interactant intactId="EBI-2799833">
        <id>Q8N1B4</id>
    </interactant>
    <interactant intactId="EBI-10311131">
        <id>Q9NP86</id>
        <label>CABP5</label>
    </interactant>
    <organismsDiffer>false</organismsDiffer>
    <experiments>3</experiments>
</comment>
<comment type="interaction">
    <interactant intactId="EBI-2799833">
        <id>Q8N1B4</id>
    </interactant>
    <interactant intactId="EBI-10171570">
        <id>Q68D86</id>
        <label>CCDC102B</label>
    </interactant>
    <organismsDiffer>false</organismsDiffer>
    <experiments>3</experiments>
</comment>
<comment type="interaction">
    <interactant intactId="EBI-2799833">
        <id>Q8N1B4</id>
    </interactant>
    <interactant intactId="EBI-10961312">
        <id>Q8IYE1</id>
        <label>CCDC13</label>
    </interactant>
    <organismsDiffer>false</organismsDiffer>
    <experiments>3</experiments>
</comment>
<comment type="interaction">
    <interactant intactId="EBI-2799833">
        <id>Q8N1B4</id>
    </interactant>
    <interactant intactId="EBI-10749669">
        <id>Q8IYE0</id>
        <label>CCDC146</label>
    </interactant>
    <organismsDiffer>false</organismsDiffer>
    <experiments>3</experiments>
</comment>
<comment type="interaction">
    <interactant intactId="EBI-2799833">
        <id>Q8N1B4</id>
    </interactant>
    <interactant intactId="EBI-10247802">
        <id>Q8IYE0-2</id>
        <label>CCDC146</label>
    </interactant>
    <organismsDiffer>false</organismsDiffer>
    <experiments>3</experiments>
</comment>
<comment type="interaction">
    <interactant intactId="EBI-2799833">
        <id>Q8N1B4</id>
    </interactant>
    <interactant intactId="EBI-740814">
        <id>Q8N715</id>
        <label>CCDC185</label>
    </interactant>
    <organismsDiffer>false</organismsDiffer>
    <experiments>3</experiments>
</comment>
<comment type="interaction">
    <interactant intactId="EBI-2799833">
        <id>Q8N1B4</id>
    </interactant>
    <interactant intactId="EBI-10961624">
        <id>Q2TAC2-2</id>
        <label>CCDC57</label>
    </interactant>
    <organismsDiffer>false</organismsDiffer>
    <experiments>3</experiments>
</comment>
<comment type="interaction">
    <interactant intactId="EBI-2799833">
        <id>Q8N1B4</id>
    </interactant>
    <interactant intactId="EBI-10175300">
        <id>Q8TD31-3</id>
        <label>CCHCR1</label>
    </interactant>
    <organismsDiffer>false</organismsDiffer>
    <experiments>3</experiments>
</comment>
<comment type="interaction">
    <interactant intactId="EBI-2799833">
        <id>Q8N1B4</id>
    </interactant>
    <interactant intactId="EBI-11983537">
        <id>Q86Y33-5</id>
        <label>CDC20B</label>
    </interactant>
    <organismsDiffer>false</organismsDiffer>
    <experiments>3</experiments>
</comment>
<comment type="interaction">
    <interactant intactId="EBI-2799833">
        <id>Q8N1B4</id>
    </interactant>
    <interactant intactId="EBI-374880">
        <id>Q99459</id>
        <label>CDC5L</label>
    </interactant>
    <organismsDiffer>false</organismsDiffer>
    <experiments>3</experiments>
</comment>
<comment type="interaction">
    <interactant intactId="EBI-2799833">
        <id>Q8N1B4</id>
    </interactant>
    <interactant intactId="EBI-746238">
        <id>Q07002</id>
        <label>CDK18</label>
    </interactant>
    <organismsDiffer>false</organismsDiffer>
    <experiments>3</experiments>
</comment>
<comment type="interaction">
    <interactant intactId="EBI-2799833">
        <id>Q8N1B4</id>
    </interactant>
    <interactant intactId="EBI-741885">
        <id>Q96LK0</id>
        <label>CEP19</label>
    </interactant>
    <organismsDiffer>false</organismsDiffer>
    <experiments>3</experiments>
</comment>
<comment type="interaction">
    <interactant intactId="EBI-2799833">
        <id>Q8N1B4</id>
    </interactant>
    <interactant intactId="EBI-749051">
        <id>Q8IYR0</id>
        <label>CFAP206</label>
    </interactant>
    <organismsDiffer>false</organismsDiffer>
    <experiments>3</experiments>
</comment>
<comment type="interaction">
    <interactant intactId="EBI-2799833">
        <id>Q8N1B4</id>
    </interactant>
    <interactant intactId="EBI-5453285">
        <id>Q2TBE0</id>
        <label>CWF19L2</label>
    </interactant>
    <organismsDiffer>false</organismsDiffer>
    <experiments>3</experiments>
</comment>
<comment type="interaction">
    <interactant intactId="EBI-2799833">
        <id>Q8N1B4</id>
    </interactant>
    <interactant intactId="EBI-14148644">
        <id>O43602-2</id>
        <label>DCX</label>
    </interactant>
    <organismsDiffer>false</organismsDiffer>
    <experiments>3</experiments>
</comment>
<comment type="interaction">
    <interactant intactId="EBI-2799833">
        <id>Q8N1B4</id>
    </interactant>
    <interactant intactId="EBI-351257">
        <id>P26196</id>
        <label>DDX6</label>
    </interactant>
    <organismsDiffer>false</organismsDiffer>
    <experiments>6</experiments>
</comment>
<comment type="interaction">
    <interactant intactId="EBI-2799833">
        <id>Q8N1B4</id>
    </interactant>
    <interactant intactId="EBI-1055336">
        <id>Q9NVH1</id>
        <label>DNAJC11</label>
    </interactant>
    <organismsDiffer>false</organismsDiffer>
    <experiments>3</experiments>
</comment>
<comment type="interaction">
    <interactant intactId="EBI-2799833">
        <id>Q8N1B4</id>
    </interactant>
    <interactant intactId="EBI-11984733">
        <id>O60941-5</id>
        <label>DTNB</label>
    </interactant>
    <organismsDiffer>false</organismsDiffer>
    <experiments>3</experiments>
</comment>
<comment type="interaction">
    <interactant intactId="EBI-2799833">
        <id>Q8N1B4</id>
    </interactant>
    <interactant intactId="EBI-6255981">
        <id>Q7L775</id>
        <label>EPM2AIP1</label>
    </interactant>
    <organismsDiffer>false</organismsDiffer>
    <experiments>6</experiments>
</comment>
<comment type="interaction">
    <interactant intactId="EBI-2799833">
        <id>Q8N1B4</id>
    </interactant>
    <interactant intactId="EBI-1752811">
        <id>Q9BQ89</id>
        <label>FAM110A</label>
    </interactant>
    <organismsDiffer>false</organismsDiffer>
    <experiments>3</experiments>
</comment>
<comment type="interaction">
    <interactant intactId="EBI-2799833">
        <id>Q8N1B4</id>
    </interactant>
    <interactant intactId="EBI-719941">
        <id>Q3B820</id>
        <label>FAM161A</label>
    </interactant>
    <organismsDiffer>false</organismsDiffer>
    <experiments>3</experiments>
</comment>
<comment type="interaction">
    <interactant intactId="EBI-2799833">
        <id>Q8N1B4</id>
    </interactant>
    <interactant intactId="EBI-7225287">
        <id>Q96MY7</id>
        <label>FAM161B</label>
    </interactant>
    <organismsDiffer>false</organismsDiffer>
    <experiments>3</experiments>
</comment>
<comment type="interaction">
    <interactant intactId="EBI-2799833">
        <id>Q8N1B4</id>
    </interactant>
    <interactant intactId="EBI-10253239">
        <id>Q6P9G8</id>
        <label>FAM184A</label>
    </interactant>
    <organismsDiffer>false</organismsDiffer>
    <experiments>3</experiments>
</comment>
<comment type="interaction">
    <interactant intactId="EBI-2799833">
        <id>Q8N1B4</id>
    </interactant>
    <interactant intactId="EBI-742802">
        <id>Q9Y247</id>
        <label>FAM50B</label>
    </interactant>
    <organismsDiffer>false</organismsDiffer>
    <experiments>3</experiments>
</comment>
<comment type="interaction">
    <interactant intactId="EBI-2799833">
        <id>Q8N1B4</id>
    </interactant>
    <interactant intactId="EBI-744104">
        <id>P55040</id>
        <label>GEM</label>
    </interactant>
    <organismsDiffer>false</organismsDiffer>
    <experiments>3</experiments>
</comment>
<comment type="interaction">
    <interactant intactId="EBI-2799833">
        <id>Q8N1B4</id>
    </interactant>
    <interactant intactId="EBI-2371750">
        <id>Q969S9</id>
        <label>GFM2</label>
    </interactant>
    <organismsDiffer>false</organismsDiffer>
    <experiments>3</experiments>
</comment>
<comment type="interaction">
    <interactant intactId="EBI-2799833">
        <id>Q8N1B4</id>
    </interactant>
    <interactant intactId="EBI-6164177">
        <id>Q92805</id>
        <label>GOLGA1</label>
    </interactant>
    <organismsDiffer>false</organismsDiffer>
    <experiments>6</experiments>
</comment>
<comment type="interaction">
    <interactant intactId="EBI-2799833">
        <id>Q8N1B4</id>
    </interactant>
    <interactant intactId="EBI-739467">
        <id>Q9H8Y8</id>
        <label>GORASP2</label>
    </interactant>
    <organismsDiffer>false</organismsDiffer>
    <experiments>3</experiments>
</comment>
<comment type="interaction">
    <interactant intactId="EBI-2799833">
        <id>Q8N1B4</id>
    </interactant>
    <interactant intactId="EBI-746309">
        <id>Q92917</id>
        <label>GPKOW</label>
    </interactant>
    <organismsDiffer>false</organismsDiffer>
    <experiments>3</experiments>
</comment>
<comment type="interaction">
    <interactant intactId="EBI-2799833">
        <id>Q8N1B4</id>
    </interactant>
    <interactant intactId="EBI-2514791">
        <id>Q96CS2</id>
        <label>HAUS1</label>
    </interactant>
    <organismsDiffer>false</organismsDiffer>
    <experiments>3</experiments>
</comment>
<comment type="interaction">
    <interactant intactId="EBI-2799833">
        <id>Q8N1B4</id>
    </interactant>
    <interactant intactId="EBI-11953488">
        <id>P56524-2</id>
        <label>HDAC4</label>
    </interactant>
    <organismsDiffer>false</organismsDiffer>
    <experiments>3</experiments>
</comment>
<comment type="interaction">
    <interactant intactId="EBI-2799833">
        <id>Q8N1B4</id>
    </interactant>
    <interactant intactId="EBI-10285245">
        <id>Q96ES5</id>
        <label>HEATR1</label>
    </interactant>
    <organismsDiffer>false</organismsDiffer>
    <experiments>3</experiments>
</comment>
<comment type="interaction">
    <interactant intactId="EBI-2799833">
        <id>Q8N1B4</id>
    </interactant>
    <interactant intactId="EBI-10330057">
        <id>V9HW29</id>
        <label>HEL-S-61</label>
    </interactant>
    <organismsDiffer>false</organismsDiffer>
    <experiments>3</experiments>
</comment>
<comment type="interaction">
    <interactant intactId="EBI-2799833">
        <id>Q8N1B4</id>
    </interactant>
    <interactant intactId="EBI-16429135">
        <id>A0A0S2Z4Q4</id>
        <label>HGS</label>
    </interactant>
    <organismsDiffer>false</organismsDiffer>
    <experiments>3</experiments>
</comment>
<comment type="interaction">
    <interactant intactId="EBI-2799833">
        <id>Q8N1B4</id>
    </interactant>
    <interactant intactId="EBI-740220">
        <id>O14964</id>
        <label>HGS</label>
    </interactant>
    <organismsDiffer>false</organismsDiffer>
    <experiments>3</experiments>
</comment>
<comment type="interaction">
    <interactant intactId="EBI-2799833">
        <id>Q8N1B4</id>
    </interactant>
    <interactant intactId="EBI-3893317">
        <id>P09067</id>
        <label>HOXB5</label>
    </interactant>
    <organismsDiffer>false</organismsDiffer>
    <experiments>3</experiments>
</comment>
<comment type="interaction">
    <interactant intactId="EBI-2799833">
        <id>Q8N1B4</id>
    </interactant>
    <interactant intactId="EBI-752007">
        <id>Q96AA8</id>
        <label>JAKMIP2</label>
    </interactant>
    <organismsDiffer>false</organismsDiffer>
    <experiments>3</experiments>
</comment>
<comment type="interaction">
    <interactant intactId="EBI-2799833">
        <id>Q8N1B4</id>
    </interactant>
    <interactant intactId="EBI-2556193">
        <id>Q63ZY3</id>
        <label>KANK2</label>
    </interactant>
    <organismsDiffer>false</organismsDiffer>
    <experiments>3</experiments>
</comment>
<comment type="interaction">
    <interactant intactId="EBI-2799833">
        <id>Q8N1B4</id>
    </interactant>
    <interactant intactId="EBI-10188326">
        <id>Q5T5P2-6</id>
        <label>KIAA1217</label>
    </interactant>
    <organismsDiffer>false</organismsDiffer>
    <experiments>3</experiments>
</comment>
<comment type="interaction">
    <interactant intactId="EBI-2799833">
        <id>Q8N1B4</id>
    </interactant>
    <interactant intactId="EBI-8472129">
        <id>Q9HAQ2</id>
        <label>KIF9</label>
    </interactant>
    <organismsDiffer>false</organismsDiffer>
    <experiments>3</experiments>
</comment>
<comment type="interaction">
    <interactant intactId="EBI-2799833">
        <id>Q8N1B4</id>
    </interactant>
    <interactant intactId="EBI-14069005">
        <id>Q9BVG8-5</id>
        <label>KIFC3</label>
    </interactant>
    <organismsDiffer>false</organismsDiffer>
    <experiments>3</experiments>
</comment>
<comment type="interaction">
    <interactant intactId="EBI-2799833">
        <id>Q8N1B4</id>
    </interactant>
    <interactant intactId="EBI-1643885">
        <id>Q6P597</id>
        <label>KLC3</label>
    </interactant>
    <organismsDiffer>false</organismsDiffer>
    <experiments>3</experiments>
</comment>
<comment type="interaction">
    <interactant intactId="EBI-2799833">
        <id>Q8N1B4</id>
    </interactant>
    <interactant intactId="EBI-739890">
        <id>Q9P2K6</id>
        <label>KLHL42</label>
    </interactant>
    <organismsDiffer>false</organismsDiffer>
    <experiments>3</experiments>
</comment>
<comment type="interaction">
    <interactant intactId="EBI-2799833">
        <id>Q8N1B4</id>
    </interactant>
    <interactant intactId="EBI-2798728">
        <id>P61968</id>
        <label>LMO4</label>
    </interactant>
    <organismsDiffer>false</organismsDiffer>
    <experiments>3</experiments>
</comment>
<comment type="interaction">
    <interactant intactId="EBI-2799833">
        <id>Q8N1B4</id>
    </interactant>
    <interactant intactId="EBI-739832">
        <id>Q8TBB1</id>
        <label>LNX1</label>
    </interactant>
    <organismsDiffer>false</organismsDiffer>
    <experiments>3</experiments>
</comment>
<comment type="interaction">
    <interactant intactId="EBI-2799833">
        <id>Q8N1B4</id>
    </interactant>
    <interactant intactId="EBI-1053295">
        <id>Q8N6R0</id>
        <label>METTL13</label>
    </interactant>
    <organismsDiffer>false</organismsDiffer>
    <experiments>3</experiments>
</comment>
<comment type="interaction">
    <interactant intactId="EBI-2799833">
        <id>Q8N1B4</id>
    </interactant>
    <interactant intactId="EBI-1048159">
        <id>P55081</id>
        <label>MFAP1</label>
    </interactant>
    <organismsDiffer>false</organismsDiffer>
    <experiments>6</experiments>
</comment>
<comment type="interaction">
    <interactant intactId="EBI-2799833">
        <id>Q8N1B4</id>
    </interactant>
    <interactant intactId="EBI-14086479">
        <id>Q8IVT4</id>
        <label>MGC50722</label>
    </interactant>
    <organismsDiffer>false</organismsDiffer>
    <experiments>3</experiments>
</comment>
<comment type="interaction">
    <interactant intactId="EBI-2799833">
        <id>Q8N1B4</id>
    </interactant>
    <interactant intactId="EBI-5325394">
        <id>Q9BYD6</id>
        <label>MRPL1</label>
    </interactant>
    <organismsDiffer>false</organismsDiffer>
    <experiments>3</experiments>
</comment>
<comment type="interaction">
    <interactant intactId="EBI-2799833">
        <id>Q8N1B4</id>
    </interactant>
    <interactant intactId="EBI-5453723">
        <id>Q9Y3B7</id>
        <label>MRPL11</label>
    </interactant>
    <organismsDiffer>false</organismsDiffer>
    <experiments>3</experiments>
</comment>
<comment type="interaction">
    <interactant intactId="EBI-2799833">
        <id>Q8N1B4</id>
    </interactant>
    <interactant intactId="EBI-715849">
        <id>O14777</id>
        <label>NDC80</label>
    </interactant>
    <organismsDiffer>false</organismsDiffer>
    <experiments>3</experiments>
</comment>
<comment type="interaction">
    <interactant intactId="EBI-2799833">
        <id>Q8N1B4</id>
    </interactant>
    <interactant intactId="EBI-352889">
        <id>Q15653</id>
        <label>NFKBIB</label>
    </interactant>
    <organismsDiffer>false</organismsDiffer>
    <experiments>3</experiments>
</comment>
<comment type="interaction">
    <interactant intactId="EBI-2799833">
        <id>Q8N1B4</id>
    </interactant>
    <interactant intactId="EBI-356811">
        <id>P46087</id>
        <label>NOP2</label>
    </interactant>
    <organismsDiffer>false</organismsDiffer>
    <experiments>3</experiments>
</comment>
<comment type="interaction">
    <interactant intactId="EBI-2799833">
        <id>Q8N1B4</id>
    </interactant>
    <interactant intactId="EBI-10260040">
        <id>Q86WQ0</id>
        <label>NR2C2AP</label>
    </interactant>
    <organismsDiffer>false</organismsDiffer>
    <experiments>3</experiments>
</comment>
<comment type="interaction">
    <interactant intactId="EBI-2799833">
        <id>Q8N1B4</id>
    </interactant>
    <interactant intactId="EBI-11960139">
        <id>Q7L8S5</id>
        <label>OTUD6A</label>
    </interactant>
    <organismsDiffer>false</organismsDiffer>
    <experiments>3</experiments>
</comment>
<comment type="interaction">
    <interactant intactId="EBI-2799833">
        <id>Q8N1B4</id>
    </interactant>
    <interactant intactId="EBI-2568609">
        <id>Q9BSJ6</id>
        <label>PIMREG</label>
    </interactant>
    <organismsDiffer>false</organismsDiffer>
    <experiments>3</experiments>
</comment>
<comment type="interaction">
    <interactant intactId="EBI-2799833">
        <id>Q8N1B4</id>
    </interactant>
    <interactant intactId="EBI-1384335">
        <id>Q6P5Z2</id>
        <label>PKN3</label>
    </interactant>
    <organismsDiffer>false</organismsDiffer>
    <experiments>3</experiments>
</comment>
<comment type="interaction">
    <interactant intactId="EBI-2799833">
        <id>Q8N1B4</id>
    </interactant>
    <interactant intactId="EBI-2557469">
        <id>Q6NYC8</id>
        <label>PPP1R18</label>
    </interactant>
    <organismsDiffer>false</organismsDiffer>
    <experiments>6</experiments>
</comment>
<comment type="interaction">
    <interactant intactId="EBI-2799833">
        <id>Q8N1B4</id>
    </interactant>
    <interactant intactId="EBI-1181405">
        <id>Q13131</id>
        <label>PRKAA1</label>
    </interactant>
    <organismsDiffer>false</organismsDiffer>
    <experiments>3</experiments>
</comment>
<comment type="interaction">
    <interactant intactId="EBI-2799833">
        <id>Q8N1B4</id>
    </interactant>
    <interactant intactId="EBI-1383852">
        <id>P54646</id>
        <label>PRKAA2</label>
    </interactant>
    <organismsDiffer>false</organismsDiffer>
    <experiments>3</experiments>
</comment>
<comment type="interaction">
    <interactant intactId="EBI-2799833">
        <id>Q8N1B4</id>
    </interactant>
    <interactant intactId="EBI-722284">
        <id>P20338</id>
        <label>RAB4A</label>
    </interactant>
    <organismsDiffer>false</organismsDiffer>
    <experiments>4</experiments>
</comment>
<comment type="interaction">
    <interactant intactId="EBI-2799833">
        <id>Q8N1B4</id>
    </interactant>
    <interactant intactId="EBI-10218066">
        <id>P61018</id>
        <label>RAB4B</label>
    </interactant>
    <organismsDiffer>false</organismsDiffer>
    <experiments>3</experiments>
</comment>
<comment type="interaction">
    <interactant intactId="EBI-2799833">
        <id>Q8N1B4</id>
    </interactant>
    <interactant intactId="EBI-2130266">
        <id>Q9H4P4</id>
        <label>RNF41</label>
    </interactant>
    <organismsDiffer>false</organismsDiffer>
    <experiments>7</experiments>
</comment>
<comment type="interaction">
    <interactant intactId="EBI-2799833">
        <id>Q8N1B4</id>
    </interactant>
    <interactant intactId="EBI-11984663">
        <id>Q06455-2</id>
        <label>RUNX1T1</label>
    </interactant>
    <organismsDiffer>false</organismsDiffer>
    <experiments>3</experiments>
</comment>
<comment type="interaction">
    <interactant intactId="EBI-2799833">
        <id>Q8N1B4</id>
    </interactant>
    <interactant intactId="EBI-748391">
        <id>Q9BWG6</id>
        <label>SCNM1</label>
    </interactant>
    <organismsDiffer>false</organismsDiffer>
    <experiments>3</experiments>
</comment>
<comment type="interaction">
    <interactant intactId="EBI-2799833">
        <id>Q8N1B4</id>
    </interactant>
    <interactant intactId="EBI-747035">
        <id>Q9H788</id>
        <label>SH2D4A</label>
    </interactant>
    <organismsDiffer>false</organismsDiffer>
    <experiments>3</experiments>
</comment>
<comment type="interaction">
    <interactant intactId="EBI-2799833">
        <id>Q8N1B4</id>
    </interactant>
    <interactant intactId="EBI-455078">
        <id>Q969G3</id>
        <label>SMARCE1</label>
    </interactant>
    <organismsDiffer>false</organismsDiffer>
    <experiments>3</experiments>
</comment>
<comment type="interaction">
    <interactant intactId="EBI-2799833">
        <id>Q8N1B4</id>
    </interactant>
    <interactant intactId="EBI-714135">
        <id>O75558</id>
        <label>STX11</label>
    </interactant>
    <organismsDiffer>false</organismsDiffer>
    <experiments>3</experiments>
</comment>
<comment type="interaction">
    <interactant intactId="EBI-2799833">
        <id>Q8N1B4</id>
    </interactant>
    <interactant intactId="EBI-358708">
        <id>Q9NYJ8</id>
        <label>TAB2</label>
    </interactant>
    <organismsDiffer>false</organismsDiffer>
    <experiments>3</experiments>
</comment>
<comment type="interaction">
    <interactant intactId="EBI-2799833">
        <id>Q8N1B4</id>
    </interactant>
    <interactant intactId="EBI-1644036">
        <id>Q86TI0</id>
        <label>TBC1D1</label>
    </interactant>
    <organismsDiffer>false</organismsDiffer>
    <experiments>3</experiments>
</comment>
<comment type="interaction">
    <interactant intactId="EBI-2799833">
        <id>Q8N1B4</id>
    </interactant>
    <interactant intactId="EBI-8787464">
        <id>Q9NU19</id>
        <label>TBC1D22B</label>
    </interactant>
    <organismsDiffer>false</organismsDiffer>
    <experiments>7</experiments>
</comment>
<comment type="interaction">
    <interactant intactId="EBI-2799833">
        <id>Q8N1B4</id>
    </interactant>
    <interactant intactId="EBI-954696">
        <id>Q8N8B7</id>
        <label>TCEANC</label>
    </interactant>
    <organismsDiffer>false</organismsDiffer>
    <experiments>3</experiments>
</comment>
<comment type="interaction">
    <interactant intactId="EBI-2799833">
        <id>Q8N1B4</id>
    </interactant>
    <interactant intactId="EBI-11955057">
        <id>Q8N8B7-2</id>
        <label>TCEANC</label>
    </interactant>
    <organismsDiffer>false</organismsDiffer>
    <experiments>3</experiments>
</comment>
<comment type="interaction">
    <interactant intactId="EBI-2799833">
        <id>Q8N1B4</id>
    </interactant>
    <interactant intactId="EBI-2555179">
        <id>Q9NUJ3</id>
        <label>TCP11L1</label>
    </interactant>
    <organismsDiffer>false</organismsDiffer>
    <experiments>3</experiments>
</comment>
<comment type="interaction">
    <interactant intactId="EBI-2799833">
        <id>Q8N1B4</id>
    </interactant>
    <interactant intactId="EBI-10176734">
        <id>D3DUQ6</id>
        <label>TEAD4</label>
    </interactant>
    <organismsDiffer>false</organismsDiffer>
    <experiments>3</experiments>
</comment>
<comment type="interaction">
    <interactant intactId="EBI-2799833">
        <id>Q8N1B4</id>
    </interactant>
    <interactant intactId="EBI-747736">
        <id>Q15561</id>
        <label>TEAD4</label>
    </interactant>
    <organismsDiffer>false</organismsDiffer>
    <experiments>3</experiments>
</comment>
<comment type="interaction">
    <interactant intactId="EBI-2799833">
        <id>Q8N1B4</id>
    </interactant>
    <interactant intactId="EBI-1790529">
        <id>Q96EK4</id>
        <label>THAP11</label>
    </interactant>
    <organismsDiffer>false</organismsDiffer>
    <experiments>3</experiments>
</comment>
<comment type="interaction">
    <interactant intactId="EBI-2799833">
        <id>Q8N1B4</id>
    </interactant>
    <interactant intactId="EBI-355607">
        <id>P06753</id>
        <label>TPM3</label>
    </interactant>
    <organismsDiffer>false</organismsDiffer>
    <experiments>3</experiments>
</comment>
<comment type="interaction">
    <interactant intactId="EBI-2799833">
        <id>Q8N1B4</id>
    </interactant>
    <interactant intactId="EBI-10184033">
        <id>Q5VU62</id>
        <label>TPM3</label>
    </interactant>
    <organismsDiffer>false</organismsDiffer>
    <experiments>3</experiments>
</comment>
<comment type="interaction">
    <interactant intactId="EBI-2799833">
        <id>Q8N1B4</id>
    </interactant>
    <interactant intactId="EBI-3650647">
        <id>Q9BUZ4</id>
        <label>TRAF4</label>
    </interactant>
    <organismsDiffer>false</organismsDiffer>
    <experiments>3</experiments>
</comment>
<comment type="interaction">
    <interactant intactId="EBI-2799833">
        <id>Q8N1B4</id>
    </interactant>
    <interactant intactId="EBI-359276">
        <id>Q9Y4K3</id>
        <label>TRAF6</label>
    </interactant>
    <organismsDiffer>false</organismsDiffer>
    <experiments>6</experiments>
</comment>
<comment type="interaction">
    <interactant intactId="EBI-2799833">
        <id>Q8N1B4</id>
    </interactant>
    <interactant intactId="EBI-3918381">
        <id>Q96PN8</id>
        <label>TSSK3</label>
    </interactant>
    <organismsDiffer>false</organismsDiffer>
    <experiments>6</experiments>
</comment>
<comment type="interaction">
    <interactant intactId="EBI-2799833">
        <id>Q8N1B4</id>
    </interactant>
    <interactant intactId="EBI-8994397">
        <id>Q5T7W7</id>
        <label>TSTD2</label>
    </interactant>
    <organismsDiffer>false</organismsDiffer>
    <experiments>6</experiments>
</comment>
<comment type="interaction">
    <interactant intactId="EBI-2799833">
        <id>Q8N1B4</id>
    </interactant>
    <interactant intactId="EBI-359793">
        <id>P40222</id>
        <label>TXLNA</label>
    </interactant>
    <organismsDiffer>false</organismsDiffer>
    <experiments>7</experiments>
</comment>
<comment type="interaction">
    <interactant intactId="EBI-2799833">
        <id>Q8N1B4</id>
    </interactant>
    <interactant intactId="EBI-6116822">
        <id>Q8N3L3</id>
        <label>TXLNB</label>
    </interactant>
    <organismsDiffer>false</organismsDiffer>
    <experiments>3</experiments>
</comment>
<comment type="interaction">
    <interactant intactId="EBI-2799833">
        <id>Q8N1B4</id>
    </interactant>
    <interactant intactId="EBI-2932492">
        <id>Q99757</id>
        <label>TXN2</label>
    </interactant>
    <organismsDiffer>false</organismsDiffer>
    <experiments>6</experiments>
</comment>
<comment type="interaction">
    <interactant intactId="EBI-2799833">
        <id>Q8N1B4</id>
    </interactant>
    <interactant intactId="EBI-743272">
        <id>O75604</id>
        <label>USP2</label>
    </interactant>
    <organismsDiffer>false</organismsDiffer>
    <experiments>6</experiments>
</comment>
<comment type="interaction">
    <interactant intactId="EBI-2799833">
        <id>Q8N1B4</id>
    </interactant>
    <interactant intactId="EBI-11980193">
        <id>Q14119</id>
        <label>VEZF1</label>
    </interactant>
    <organismsDiffer>false</organismsDiffer>
    <experiments>3</experiments>
</comment>
<comment type="interaction">
    <interactant intactId="EBI-2799833">
        <id>Q8N1B4</id>
    </interactant>
    <interactant intactId="EBI-10243107">
        <id>Q548N1</id>
        <label>VPS28</label>
    </interactant>
    <organismsDiffer>false</organismsDiffer>
    <experiments>3</experiments>
</comment>
<comment type="interaction">
    <interactant intactId="EBI-2799833">
        <id>Q8N1B4</id>
    </interactant>
    <interactant intactId="EBI-727424">
        <id>Q9UK41</id>
        <label>VPS28</label>
    </interactant>
    <organismsDiffer>false</organismsDiffer>
    <experiments>4</experiments>
</comment>
<comment type="interaction">
    <interactant intactId="EBI-2799833">
        <id>Q8N1B4</id>
    </interactant>
    <interactant intactId="EBI-11044388">
        <id>Q96JG6</id>
        <label>VPS50</label>
    </interactant>
    <organismsDiffer>false</organismsDiffer>
    <experiments>10</experiments>
</comment>
<comment type="interaction">
    <interactant intactId="EBI-2799833">
        <id>Q8N1B4</id>
    </interactant>
    <interactant intactId="EBI-16067837">
        <id>Q9UID3-1</id>
        <label>VPS51</label>
    </interactant>
    <organismsDiffer>false</organismsDiffer>
    <experiments>4</experiments>
</comment>
<comment type="interaction">
    <interactant intactId="EBI-2799833">
        <id>Q8N1B4</id>
    </interactant>
    <interactant intactId="EBI-712969">
        <id>Q9Y3C0</id>
        <label>WASHC3</label>
    </interactant>
    <organismsDiffer>false</organismsDiffer>
    <experiments>3</experiments>
</comment>
<comment type="interaction">
    <interactant intactId="EBI-2799833">
        <id>Q8N1B4</id>
    </interactant>
    <interactant intactId="EBI-751647">
        <id>Q15007</id>
        <label>WTAP</label>
    </interactant>
    <organismsDiffer>false</organismsDiffer>
    <experiments>6</experiments>
</comment>
<comment type="interaction">
    <interactant intactId="EBI-2799833">
        <id>Q8N1B4</id>
    </interactant>
    <interactant intactId="EBI-14104088">
        <id>Q53FD0-2</id>
        <label>ZC2HC1C</label>
    </interactant>
    <organismsDiffer>false</organismsDiffer>
    <experiments>3</experiments>
</comment>
<comment type="interaction">
    <interactant intactId="EBI-2799833">
        <id>Q8N1B4</id>
    </interactant>
    <interactant intactId="EBI-2682299">
        <id>Q96NC0</id>
        <label>ZMAT2</label>
    </interactant>
    <organismsDiffer>false</organismsDiffer>
    <experiments>3</experiments>
</comment>
<comment type="interaction">
    <interactant intactId="EBI-2799833">
        <id>Q8N1B4</id>
    </interactant>
    <interactant intactId="EBI-740727">
        <id>Q8TAU3</id>
        <label>ZNF417</label>
    </interactant>
    <organismsDiffer>false</organismsDiffer>
    <experiments>3</experiments>
</comment>
<comment type="interaction">
    <interactant intactId="EBI-2799833">
        <id>Q8N1B4</id>
    </interactant>
    <interactant intactId="EBI-6427977">
        <id>Q96SQ5</id>
        <label>ZNF587</label>
    </interactant>
    <organismsDiffer>false</organismsDiffer>
    <experiments>3</experiments>
</comment>
<comment type="interaction">
    <interactant intactId="EBI-2799833">
        <id>Q8N1B4</id>
    </interactant>
    <interactant intactId="EBI-25492395">
        <id>PRO_0000449633</id>
        <label>rep</label>
        <dbReference type="UniProtKB" id="P0DTD1"/>
    </interactant>
    <organismsDiffer>true</organismsDiffer>
    <experiments>3</experiments>
</comment>
<comment type="interaction">
    <interactant intactId="EBI-2799833">
        <id>Q8N1B4</id>
    </interactant>
    <interactant intactId="EBI-6863748">
        <id>PRO_0000037551</id>
        <dbReference type="UniProtKB" id="Q9WMX2"/>
    </interactant>
    <organismsDiffer>true</organismsDiffer>
    <experiments>2</experiments>
</comment>
<comment type="subcellular location">
    <subcellularLocation>
        <location evidence="2 3">Golgi apparatus</location>
        <location evidence="2 3">trans-Golgi network membrane</location>
        <topology>Peripheral membrane protein</topology>
    </subcellularLocation>
    <subcellularLocation>
        <location evidence="3">Endosome membrane</location>
        <topology>Peripheral membrane protein</topology>
    </subcellularLocation>
    <subcellularLocation>
        <location evidence="6">Recycling endosome</location>
    </subcellularLocation>
    <text evidence="6">Localizes to the trans-Golgi network as part of the GARP complex, while it localizes to recycling endosomes as part of the EARP complex (PubMed:25799061).</text>
</comment>
<comment type="alternative products">
    <event type="alternative splicing"/>
    <isoform>
        <id>Q8N1B4-1</id>
        <name>1</name>
        <sequence type="displayed"/>
    </isoform>
    <isoform>
        <id>Q8N1B4-2</id>
        <name>2</name>
        <sequence type="described" ref="VSP_056476"/>
    </isoform>
</comment>
<comment type="similarity">
    <text evidence="9">Belongs to the VPS52 family.</text>
</comment>
<comment type="sequence caution" evidence="9">
    <conflict type="erroneous gene model prediction">
        <sequence resource="EMBL-CDS" id="CAI95619"/>
    </conflict>
</comment>
<keyword id="KW-0007">Acetylation</keyword>
<keyword id="KW-0025">Alternative splicing</keyword>
<keyword id="KW-0175">Coiled coil</keyword>
<keyword id="KW-0967">Endosome</keyword>
<keyword id="KW-0333">Golgi apparatus</keyword>
<keyword id="KW-0472">Membrane</keyword>
<keyword id="KW-0597">Phosphoprotein</keyword>
<keyword id="KW-0653">Protein transport</keyword>
<keyword id="KW-1267">Proteomics identification</keyword>
<keyword id="KW-1185">Reference proteome</keyword>
<keyword id="KW-0813">Transport</keyword>
<protein>
    <recommendedName>
        <fullName>Vacuolar protein sorting-associated protein 52 homolog</fullName>
    </recommendedName>
    <alternativeName>
        <fullName>SAC2 suppressor of actin mutations 2-like protein</fullName>
    </alternativeName>
</protein>
<organism>
    <name type="scientific">Homo sapiens</name>
    <name type="common">Human</name>
    <dbReference type="NCBI Taxonomy" id="9606"/>
    <lineage>
        <taxon>Eukaryota</taxon>
        <taxon>Metazoa</taxon>
        <taxon>Chordata</taxon>
        <taxon>Craniata</taxon>
        <taxon>Vertebrata</taxon>
        <taxon>Euteleostomi</taxon>
        <taxon>Mammalia</taxon>
        <taxon>Eutheria</taxon>
        <taxon>Euarchontoglires</taxon>
        <taxon>Primates</taxon>
        <taxon>Haplorrhini</taxon>
        <taxon>Catarrhini</taxon>
        <taxon>Hominidae</taxon>
        <taxon>Homo</taxon>
    </lineage>
</organism>
<evidence type="ECO:0000255" key="1"/>
<evidence type="ECO:0000269" key="2">
    <source>
    </source>
</evidence>
<evidence type="ECO:0000269" key="3">
    <source>
    </source>
</evidence>
<evidence type="ECO:0000269" key="4">
    <source>
    </source>
</evidence>
<evidence type="ECO:0000269" key="5">
    <source>
    </source>
</evidence>
<evidence type="ECO:0000269" key="6">
    <source>
    </source>
</evidence>
<evidence type="ECO:0000269" key="7">
    <source>
    </source>
</evidence>
<evidence type="ECO:0000303" key="8">
    <source>
    </source>
</evidence>
<evidence type="ECO:0000305" key="9"/>
<evidence type="ECO:0007744" key="10">
    <source>
    </source>
</evidence>
<evidence type="ECO:0007744" key="11">
    <source>
    </source>
</evidence>
<evidence type="ECO:0007744" key="12">
    <source>
    </source>
</evidence>
<gene>
    <name type="primary">VPS52</name>
    <name type="synonym">SACM2L</name>
</gene>
<dbReference type="EMBL" id="AK297935">
    <property type="protein sequence ID" value="BAG60251.1"/>
    <property type="molecule type" value="mRNA"/>
</dbReference>
<dbReference type="EMBL" id="AK222867">
    <property type="protein sequence ID" value="BAD96587.1"/>
    <property type="molecule type" value="mRNA"/>
</dbReference>
<dbReference type="EMBL" id="AL645940">
    <property type="status" value="NOT_ANNOTATED_CDS"/>
    <property type="molecule type" value="Genomic_DNA"/>
</dbReference>
<dbReference type="EMBL" id="AL031228">
    <property type="protein sequence ID" value="CAI95619.1"/>
    <property type="status" value="ALT_SEQ"/>
    <property type="molecule type" value="Genomic_DNA"/>
</dbReference>
<dbReference type="EMBL" id="BX248408">
    <property type="status" value="NOT_ANNOTATED_CDS"/>
    <property type="molecule type" value="Genomic_DNA"/>
</dbReference>
<dbReference type="EMBL" id="CR759786">
    <property type="status" value="NOT_ANNOTATED_CDS"/>
    <property type="molecule type" value="Genomic_DNA"/>
</dbReference>
<dbReference type="EMBL" id="CR759817">
    <property type="status" value="NOT_ANNOTATED_CDS"/>
    <property type="molecule type" value="Genomic_DNA"/>
</dbReference>
<dbReference type="EMBL" id="CR762434">
    <property type="status" value="NOT_ANNOTATED_CDS"/>
    <property type="molecule type" value="Genomic_DNA"/>
</dbReference>
<dbReference type="EMBL" id="CH471081">
    <property type="protein sequence ID" value="EAX03688.1"/>
    <property type="molecule type" value="Genomic_DNA"/>
</dbReference>
<dbReference type="EMBL" id="BC032108">
    <property type="protein sequence ID" value="AAH32108.1"/>
    <property type="molecule type" value="mRNA"/>
</dbReference>
<dbReference type="EMBL" id="BC040114">
    <property type="protein sequence ID" value="AAH40114.2"/>
    <property type="molecule type" value="mRNA"/>
</dbReference>
<dbReference type="EMBL" id="AL390171">
    <property type="protein sequence ID" value="CAB99099.1"/>
    <property type="molecule type" value="mRNA"/>
</dbReference>
<dbReference type="CCDS" id="CCDS4770.2">
    <molecule id="Q8N1B4-1"/>
</dbReference>
<dbReference type="PIR" id="T51882">
    <property type="entry name" value="T51882"/>
</dbReference>
<dbReference type="RefSeq" id="NP_001276104.1">
    <molecule id="Q8N1B4-2"/>
    <property type="nucleotide sequence ID" value="NM_001289175.1"/>
</dbReference>
<dbReference type="RefSeq" id="NP_001276105.1">
    <property type="nucleotide sequence ID" value="NM_001289176.1"/>
</dbReference>
<dbReference type="RefSeq" id="NP_072047.4">
    <molecule id="Q8N1B4-1"/>
    <property type="nucleotide sequence ID" value="NM_022553.5"/>
</dbReference>
<dbReference type="RefSeq" id="XP_016866667.1">
    <property type="nucleotide sequence ID" value="XM_017011178.1"/>
</dbReference>
<dbReference type="BioGRID" id="112200">
    <property type="interactions" value="201"/>
</dbReference>
<dbReference type="ComplexPortal" id="CPX-6207">
    <property type="entry name" value="EARP tethering complex"/>
</dbReference>
<dbReference type="ComplexPortal" id="CPX-6208">
    <property type="entry name" value="GARP tethering complex"/>
</dbReference>
<dbReference type="CORUM" id="Q8N1B4"/>
<dbReference type="DIP" id="DIP-57843N"/>
<dbReference type="FunCoup" id="Q8N1B4">
    <property type="interactions" value="3105"/>
</dbReference>
<dbReference type="IntAct" id="Q8N1B4">
    <property type="interactions" value="171"/>
</dbReference>
<dbReference type="MINT" id="Q8N1B4"/>
<dbReference type="STRING" id="9606.ENSP00000409952"/>
<dbReference type="GlyGen" id="Q8N1B4">
    <property type="glycosylation" value="1 site, 1 O-linked glycan (1 site)"/>
</dbReference>
<dbReference type="iPTMnet" id="Q8N1B4"/>
<dbReference type="MetOSite" id="Q8N1B4"/>
<dbReference type="PhosphoSitePlus" id="Q8N1B4"/>
<dbReference type="BioMuta" id="VPS52"/>
<dbReference type="DMDM" id="74750887"/>
<dbReference type="jPOST" id="Q8N1B4"/>
<dbReference type="MassIVE" id="Q8N1B4"/>
<dbReference type="PaxDb" id="9606-ENSP00000409952"/>
<dbReference type="PeptideAtlas" id="Q8N1B4"/>
<dbReference type="ProteomicsDB" id="4699"/>
<dbReference type="ProteomicsDB" id="71582">
    <molecule id="Q8N1B4-1"/>
</dbReference>
<dbReference type="Pumba" id="Q8N1B4"/>
<dbReference type="Antibodypedia" id="28991">
    <property type="antibodies" value="130 antibodies from 21 providers"/>
</dbReference>
<dbReference type="DNASU" id="6293"/>
<dbReference type="Ensembl" id="ENST00000383210.4">
    <molecule id="Q8N1B4-1"/>
    <property type="protein sequence ID" value="ENSP00000372697.4"/>
    <property type="gene ID" value="ENSG00000206286.11"/>
</dbReference>
<dbReference type="Ensembl" id="ENST00000428608.2">
    <molecule id="Q8N1B4-1"/>
    <property type="protein sequence ID" value="ENSP00000406988.2"/>
    <property type="gene ID" value="ENSG00000236014.10"/>
</dbReference>
<dbReference type="Ensembl" id="ENST00000441058.2">
    <molecule id="Q8N1B4-1"/>
    <property type="protein sequence ID" value="ENSP00000390831.2"/>
    <property type="gene ID" value="ENSG00000228425.9"/>
</dbReference>
<dbReference type="Ensembl" id="ENST00000443860.2">
    <molecule id="Q8N1B4-1"/>
    <property type="protein sequence ID" value="ENSP00000404016.2"/>
    <property type="gene ID" value="ENSG00000224455.9"/>
</dbReference>
<dbReference type="Ensembl" id="ENST00000445902.3">
    <molecule id="Q8N1B4-1"/>
    <property type="protein sequence ID" value="ENSP00000409952.2"/>
    <property type="gene ID" value="ENSG00000223501.9"/>
</dbReference>
<dbReference type="Ensembl" id="ENST00000448042.2">
    <molecule id="Q8N1B4-1"/>
    <property type="protein sequence ID" value="ENSP00000391197.2"/>
    <property type="gene ID" value="ENSG00000225590.9"/>
</dbReference>
<dbReference type="GeneID" id="6293"/>
<dbReference type="KEGG" id="hsa:6293"/>
<dbReference type="MANE-Select" id="ENST00000445902.3">
    <property type="protein sequence ID" value="ENSP00000409952.2"/>
    <property type="RefSeq nucleotide sequence ID" value="NM_022553.6"/>
    <property type="RefSeq protein sequence ID" value="NP_072047.4"/>
</dbReference>
<dbReference type="UCSC" id="uc003odm.3">
    <molecule id="Q8N1B4-1"/>
    <property type="organism name" value="human"/>
</dbReference>
<dbReference type="AGR" id="HGNC:10518"/>
<dbReference type="CTD" id="6293"/>
<dbReference type="DisGeNET" id="6293"/>
<dbReference type="GeneCards" id="VPS52"/>
<dbReference type="HGNC" id="HGNC:10518">
    <property type="gene designation" value="VPS52"/>
</dbReference>
<dbReference type="HPA" id="ENSG00000223501">
    <property type="expression patterns" value="Low tissue specificity"/>
</dbReference>
<dbReference type="MIM" id="603443">
    <property type="type" value="gene"/>
</dbReference>
<dbReference type="neXtProt" id="NX_Q8N1B4"/>
<dbReference type="OpenTargets" id="ENSG00000223501"/>
<dbReference type="PharmGKB" id="PA34926"/>
<dbReference type="VEuPathDB" id="HostDB:ENSG00000223501"/>
<dbReference type="eggNOG" id="KOG1961">
    <property type="taxonomic scope" value="Eukaryota"/>
</dbReference>
<dbReference type="GeneTree" id="ENSGT00390000008815"/>
<dbReference type="HOGENOM" id="CLU_010797_0_0_1"/>
<dbReference type="InParanoid" id="Q8N1B4"/>
<dbReference type="OMA" id="IHVVMVE"/>
<dbReference type="OrthoDB" id="19482at2759"/>
<dbReference type="PAN-GO" id="Q8N1B4">
    <property type="GO annotations" value="6 GO annotations based on evolutionary models"/>
</dbReference>
<dbReference type="PhylomeDB" id="Q8N1B4"/>
<dbReference type="TreeFam" id="TF314937"/>
<dbReference type="PathwayCommons" id="Q8N1B4"/>
<dbReference type="Reactome" id="R-HSA-6811440">
    <property type="pathway name" value="Retrograde transport at the Trans-Golgi-Network"/>
</dbReference>
<dbReference type="SignaLink" id="Q8N1B4"/>
<dbReference type="BioGRID-ORCS" id="6293">
    <property type="hits" value="209 hits in 1175 CRISPR screens"/>
</dbReference>
<dbReference type="ChiTaRS" id="VPS52">
    <property type="organism name" value="human"/>
</dbReference>
<dbReference type="GeneWiki" id="VPS52"/>
<dbReference type="GenomeRNAi" id="6293"/>
<dbReference type="Pharos" id="Q8N1B4">
    <property type="development level" value="Tbio"/>
</dbReference>
<dbReference type="PRO" id="PR:Q8N1B4"/>
<dbReference type="Proteomes" id="UP000005640">
    <property type="component" value="Chromosome 6"/>
</dbReference>
<dbReference type="RNAct" id="Q8N1B4">
    <property type="molecule type" value="protein"/>
</dbReference>
<dbReference type="Bgee" id="ENSG00000223501">
    <property type="expression patterns" value="Expressed in right lobe of thyroid gland and 95 other cell types or tissues"/>
</dbReference>
<dbReference type="ExpressionAtlas" id="Q8N1B4">
    <property type="expression patterns" value="baseline and differential"/>
</dbReference>
<dbReference type="GO" id="GO:0005829">
    <property type="term" value="C:cytosol"/>
    <property type="evidence" value="ECO:0007669"/>
    <property type="project" value="GOC"/>
</dbReference>
<dbReference type="GO" id="GO:1990745">
    <property type="term" value="C:EARP complex"/>
    <property type="evidence" value="ECO:0000314"/>
    <property type="project" value="UniProtKB"/>
</dbReference>
<dbReference type="GO" id="GO:0010008">
    <property type="term" value="C:endosome membrane"/>
    <property type="evidence" value="ECO:0007669"/>
    <property type="project" value="UniProtKB-SubCell"/>
</dbReference>
<dbReference type="GO" id="GO:0000938">
    <property type="term" value="C:GARP complex"/>
    <property type="evidence" value="ECO:0000314"/>
    <property type="project" value="MGI"/>
</dbReference>
<dbReference type="GO" id="GO:0005794">
    <property type="term" value="C:Golgi apparatus"/>
    <property type="evidence" value="ECO:0000314"/>
    <property type="project" value="UniProtKB"/>
</dbReference>
<dbReference type="GO" id="GO:0016020">
    <property type="term" value="C:membrane"/>
    <property type="evidence" value="ECO:0000314"/>
    <property type="project" value="MGI"/>
</dbReference>
<dbReference type="GO" id="GO:0048471">
    <property type="term" value="C:perinuclear region of cytoplasm"/>
    <property type="evidence" value="ECO:0000314"/>
    <property type="project" value="UniProtKB"/>
</dbReference>
<dbReference type="GO" id="GO:0098794">
    <property type="term" value="C:postsynapse"/>
    <property type="evidence" value="ECO:0007669"/>
    <property type="project" value="Ensembl"/>
</dbReference>
<dbReference type="GO" id="GO:0098793">
    <property type="term" value="C:presynapse"/>
    <property type="evidence" value="ECO:0007669"/>
    <property type="project" value="Ensembl"/>
</dbReference>
<dbReference type="GO" id="GO:0055037">
    <property type="term" value="C:recycling endosome"/>
    <property type="evidence" value="ECO:0000314"/>
    <property type="project" value="UniProtKB"/>
</dbReference>
<dbReference type="GO" id="GO:0032588">
    <property type="term" value="C:trans-Golgi network membrane"/>
    <property type="evidence" value="ECO:0000304"/>
    <property type="project" value="Reactome"/>
</dbReference>
<dbReference type="GO" id="GO:0019905">
    <property type="term" value="F:syntaxin binding"/>
    <property type="evidence" value="ECO:0000353"/>
    <property type="project" value="UniProtKB"/>
</dbReference>
<dbReference type="GO" id="GO:0010668">
    <property type="term" value="P:ectodermal cell differentiation"/>
    <property type="evidence" value="ECO:0007669"/>
    <property type="project" value="Ensembl"/>
</dbReference>
<dbReference type="GO" id="GO:0048611">
    <property type="term" value="P:embryonic ectodermal digestive tract development"/>
    <property type="evidence" value="ECO:0007669"/>
    <property type="project" value="Ensembl"/>
</dbReference>
<dbReference type="GO" id="GO:0032456">
    <property type="term" value="P:endocytic recycling"/>
    <property type="evidence" value="ECO:0000315"/>
    <property type="project" value="UniProtKB"/>
</dbReference>
<dbReference type="GO" id="GO:0006896">
    <property type="term" value="P:Golgi to vacuole transport"/>
    <property type="evidence" value="ECO:0000318"/>
    <property type="project" value="GO_Central"/>
</dbReference>
<dbReference type="GO" id="GO:0007041">
    <property type="term" value="P:lysosomal transport"/>
    <property type="evidence" value="ECO:0000314"/>
    <property type="project" value="MGI"/>
</dbReference>
<dbReference type="GO" id="GO:0006605">
    <property type="term" value="P:protein targeting"/>
    <property type="evidence" value="ECO:0007669"/>
    <property type="project" value="Ensembl"/>
</dbReference>
<dbReference type="GO" id="GO:0015031">
    <property type="term" value="P:protein transport"/>
    <property type="evidence" value="ECO:0007669"/>
    <property type="project" value="UniProtKB-KW"/>
</dbReference>
<dbReference type="GO" id="GO:0042147">
    <property type="term" value="P:retrograde transport, endosome to Golgi"/>
    <property type="evidence" value="ECO:0000318"/>
    <property type="project" value="GO_Central"/>
</dbReference>
<dbReference type="GO" id="GO:0090119">
    <property type="term" value="P:vesicle-mediated cholesterol transport"/>
    <property type="evidence" value="ECO:0007669"/>
    <property type="project" value="Ensembl"/>
</dbReference>
<dbReference type="InterPro" id="IPR007258">
    <property type="entry name" value="Vps52"/>
</dbReference>
<dbReference type="InterPro" id="IPR048361">
    <property type="entry name" value="Vps52_C"/>
</dbReference>
<dbReference type="InterPro" id="IPR048319">
    <property type="entry name" value="Vps52_CC"/>
</dbReference>
<dbReference type="PANTHER" id="PTHR14190">
    <property type="entry name" value="SUPPRESSOR OF ACTIN MUTATIONS 2/VACUOLAR PROTEIN SORTING 52"/>
    <property type="match status" value="1"/>
</dbReference>
<dbReference type="PANTHER" id="PTHR14190:SF7">
    <property type="entry name" value="VACUOLAR PROTEIN SORTING-ASSOCIATED PROTEIN 52 HOMOLOG"/>
    <property type="match status" value="1"/>
</dbReference>
<dbReference type="Pfam" id="PF20655">
    <property type="entry name" value="Vps52_C"/>
    <property type="match status" value="1"/>
</dbReference>
<dbReference type="Pfam" id="PF04129">
    <property type="entry name" value="Vps52_CC"/>
    <property type="match status" value="1"/>
</dbReference>
<reference key="1">
    <citation type="journal article" date="2004" name="Nat. Genet.">
        <title>Complete sequencing and characterization of 21,243 full-length human cDNAs.</title>
        <authorList>
            <person name="Ota T."/>
            <person name="Suzuki Y."/>
            <person name="Nishikawa T."/>
            <person name="Otsuki T."/>
            <person name="Sugiyama T."/>
            <person name="Irie R."/>
            <person name="Wakamatsu A."/>
            <person name="Hayashi K."/>
            <person name="Sato H."/>
            <person name="Nagai K."/>
            <person name="Kimura K."/>
            <person name="Makita H."/>
            <person name="Sekine M."/>
            <person name="Obayashi M."/>
            <person name="Nishi T."/>
            <person name="Shibahara T."/>
            <person name="Tanaka T."/>
            <person name="Ishii S."/>
            <person name="Yamamoto J."/>
            <person name="Saito K."/>
            <person name="Kawai Y."/>
            <person name="Isono Y."/>
            <person name="Nakamura Y."/>
            <person name="Nagahari K."/>
            <person name="Murakami K."/>
            <person name="Yasuda T."/>
            <person name="Iwayanagi T."/>
            <person name="Wagatsuma M."/>
            <person name="Shiratori A."/>
            <person name="Sudo H."/>
            <person name="Hosoiri T."/>
            <person name="Kaku Y."/>
            <person name="Kodaira H."/>
            <person name="Kondo H."/>
            <person name="Sugawara M."/>
            <person name="Takahashi M."/>
            <person name="Kanda K."/>
            <person name="Yokoi T."/>
            <person name="Furuya T."/>
            <person name="Kikkawa E."/>
            <person name="Omura Y."/>
            <person name="Abe K."/>
            <person name="Kamihara K."/>
            <person name="Katsuta N."/>
            <person name="Sato K."/>
            <person name="Tanikawa M."/>
            <person name="Yamazaki M."/>
            <person name="Ninomiya K."/>
            <person name="Ishibashi T."/>
            <person name="Yamashita H."/>
            <person name="Murakawa K."/>
            <person name="Fujimori K."/>
            <person name="Tanai H."/>
            <person name="Kimata M."/>
            <person name="Watanabe M."/>
            <person name="Hiraoka S."/>
            <person name="Chiba Y."/>
            <person name="Ishida S."/>
            <person name="Ono Y."/>
            <person name="Takiguchi S."/>
            <person name="Watanabe S."/>
            <person name="Yosida M."/>
            <person name="Hotuta T."/>
            <person name="Kusano J."/>
            <person name="Kanehori K."/>
            <person name="Takahashi-Fujii A."/>
            <person name="Hara H."/>
            <person name="Tanase T.-O."/>
            <person name="Nomura Y."/>
            <person name="Togiya S."/>
            <person name="Komai F."/>
            <person name="Hara R."/>
            <person name="Takeuchi K."/>
            <person name="Arita M."/>
            <person name="Imose N."/>
            <person name="Musashino K."/>
            <person name="Yuuki H."/>
            <person name="Oshima A."/>
            <person name="Sasaki N."/>
            <person name="Aotsuka S."/>
            <person name="Yoshikawa Y."/>
            <person name="Matsunawa H."/>
            <person name="Ichihara T."/>
            <person name="Shiohata N."/>
            <person name="Sano S."/>
            <person name="Moriya S."/>
            <person name="Momiyama H."/>
            <person name="Satoh N."/>
            <person name="Takami S."/>
            <person name="Terashima Y."/>
            <person name="Suzuki O."/>
            <person name="Nakagawa S."/>
            <person name="Senoh A."/>
            <person name="Mizoguchi H."/>
            <person name="Goto Y."/>
            <person name="Shimizu F."/>
            <person name="Wakebe H."/>
            <person name="Hishigaki H."/>
            <person name="Watanabe T."/>
            <person name="Sugiyama A."/>
            <person name="Takemoto M."/>
            <person name="Kawakami B."/>
            <person name="Yamazaki M."/>
            <person name="Watanabe K."/>
            <person name="Kumagai A."/>
            <person name="Itakura S."/>
            <person name="Fukuzumi Y."/>
            <person name="Fujimori Y."/>
            <person name="Komiyama M."/>
            <person name="Tashiro H."/>
            <person name="Tanigami A."/>
            <person name="Fujiwara T."/>
            <person name="Ono T."/>
            <person name="Yamada K."/>
            <person name="Fujii Y."/>
            <person name="Ozaki K."/>
            <person name="Hirao M."/>
            <person name="Ohmori Y."/>
            <person name="Kawabata A."/>
            <person name="Hikiji T."/>
            <person name="Kobatake N."/>
            <person name="Inagaki H."/>
            <person name="Ikema Y."/>
            <person name="Okamoto S."/>
            <person name="Okitani R."/>
            <person name="Kawakami T."/>
            <person name="Noguchi S."/>
            <person name="Itoh T."/>
            <person name="Shigeta K."/>
            <person name="Senba T."/>
            <person name="Matsumura K."/>
            <person name="Nakajima Y."/>
            <person name="Mizuno T."/>
            <person name="Morinaga M."/>
            <person name="Sasaki M."/>
            <person name="Togashi T."/>
            <person name="Oyama M."/>
            <person name="Hata H."/>
            <person name="Watanabe M."/>
            <person name="Komatsu T."/>
            <person name="Mizushima-Sugano J."/>
            <person name="Satoh T."/>
            <person name="Shirai Y."/>
            <person name="Takahashi Y."/>
            <person name="Nakagawa K."/>
            <person name="Okumura K."/>
            <person name="Nagase T."/>
            <person name="Nomura N."/>
            <person name="Kikuchi H."/>
            <person name="Masuho Y."/>
            <person name="Yamashita R."/>
            <person name="Nakai K."/>
            <person name="Yada T."/>
            <person name="Nakamura Y."/>
            <person name="Ohara O."/>
            <person name="Isogai T."/>
            <person name="Sugano S."/>
        </authorList>
    </citation>
    <scope>NUCLEOTIDE SEQUENCE [LARGE SCALE MRNA] (ISOFORM 2)</scope>
</reference>
<reference key="2">
    <citation type="submission" date="2005-04" db="EMBL/GenBank/DDBJ databases">
        <authorList>
            <person name="Suzuki Y."/>
            <person name="Sugano S."/>
            <person name="Totoki Y."/>
            <person name="Toyoda A."/>
            <person name="Takeda T."/>
            <person name="Sakaki Y."/>
            <person name="Tanaka A."/>
            <person name="Yokoyama S."/>
        </authorList>
    </citation>
    <scope>NUCLEOTIDE SEQUENCE [LARGE SCALE MRNA] (ISOFORM 1)</scope>
    <source>
        <tissue>Liver</tissue>
    </source>
</reference>
<reference key="3">
    <citation type="journal article" date="2003" name="Nature">
        <title>The DNA sequence and analysis of human chromosome 6.</title>
        <authorList>
            <person name="Mungall A.J."/>
            <person name="Palmer S.A."/>
            <person name="Sims S.K."/>
            <person name="Edwards C.A."/>
            <person name="Ashurst J.L."/>
            <person name="Wilming L."/>
            <person name="Jones M.C."/>
            <person name="Horton R."/>
            <person name="Hunt S.E."/>
            <person name="Scott C.E."/>
            <person name="Gilbert J.G.R."/>
            <person name="Clamp M.E."/>
            <person name="Bethel G."/>
            <person name="Milne S."/>
            <person name="Ainscough R."/>
            <person name="Almeida J.P."/>
            <person name="Ambrose K.D."/>
            <person name="Andrews T.D."/>
            <person name="Ashwell R.I.S."/>
            <person name="Babbage A.K."/>
            <person name="Bagguley C.L."/>
            <person name="Bailey J."/>
            <person name="Banerjee R."/>
            <person name="Barker D.J."/>
            <person name="Barlow K.F."/>
            <person name="Bates K."/>
            <person name="Beare D.M."/>
            <person name="Beasley H."/>
            <person name="Beasley O."/>
            <person name="Bird C.P."/>
            <person name="Blakey S.E."/>
            <person name="Bray-Allen S."/>
            <person name="Brook J."/>
            <person name="Brown A.J."/>
            <person name="Brown J.Y."/>
            <person name="Burford D.C."/>
            <person name="Burrill W."/>
            <person name="Burton J."/>
            <person name="Carder C."/>
            <person name="Carter N.P."/>
            <person name="Chapman J.C."/>
            <person name="Clark S.Y."/>
            <person name="Clark G."/>
            <person name="Clee C.M."/>
            <person name="Clegg S."/>
            <person name="Cobley V."/>
            <person name="Collier R.E."/>
            <person name="Collins J.E."/>
            <person name="Colman L.K."/>
            <person name="Corby N.R."/>
            <person name="Coville G.J."/>
            <person name="Culley K.M."/>
            <person name="Dhami P."/>
            <person name="Davies J."/>
            <person name="Dunn M."/>
            <person name="Earthrowl M.E."/>
            <person name="Ellington A.E."/>
            <person name="Evans K.A."/>
            <person name="Faulkner L."/>
            <person name="Francis M.D."/>
            <person name="Frankish A."/>
            <person name="Frankland J."/>
            <person name="French L."/>
            <person name="Garner P."/>
            <person name="Garnett J."/>
            <person name="Ghori M.J."/>
            <person name="Gilby L.M."/>
            <person name="Gillson C.J."/>
            <person name="Glithero R.J."/>
            <person name="Grafham D.V."/>
            <person name="Grant M."/>
            <person name="Gribble S."/>
            <person name="Griffiths C."/>
            <person name="Griffiths M.N.D."/>
            <person name="Hall R."/>
            <person name="Halls K.S."/>
            <person name="Hammond S."/>
            <person name="Harley J.L."/>
            <person name="Hart E.A."/>
            <person name="Heath P.D."/>
            <person name="Heathcott R."/>
            <person name="Holmes S.J."/>
            <person name="Howden P.J."/>
            <person name="Howe K.L."/>
            <person name="Howell G.R."/>
            <person name="Huckle E."/>
            <person name="Humphray S.J."/>
            <person name="Humphries M.D."/>
            <person name="Hunt A.R."/>
            <person name="Johnson C.M."/>
            <person name="Joy A.A."/>
            <person name="Kay M."/>
            <person name="Keenan S.J."/>
            <person name="Kimberley A.M."/>
            <person name="King A."/>
            <person name="Laird G.K."/>
            <person name="Langford C."/>
            <person name="Lawlor S."/>
            <person name="Leongamornlert D.A."/>
            <person name="Leversha M."/>
            <person name="Lloyd C.R."/>
            <person name="Lloyd D.M."/>
            <person name="Loveland J.E."/>
            <person name="Lovell J."/>
            <person name="Martin S."/>
            <person name="Mashreghi-Mohammadi M."/>
            <person name="Maslen G.L."/>
            <person name="Matthews L."/>
            <person name="McCann O.T."/>
            <person name="McLaren S.J."/>
            <person name="McLay K."/>
            <person name="McMurray A."/>
            <person name="Moore M.J.F."/>
            <person name="Mullikin J.C."/>
            <person name="Niblett D."/>
            <person name="Nickerson T."/>
            <person name="Novik K.L."/>
            <person name="Oliver K."/>
            <person name="Overton-Larty E.K."/>
            <person name="Parker A."/>
            <person name="Patel R."/>
            <person name="Pearce A.V."/>
            <person name="Peck A.I."/>
            <person name="Phillimore B.J.C.T."/>
            <person name="Phillips S."/>
            <person name="Plumb R.W."/>
            <person name="Porter K.M."/>
            <person name="Ramsey Y."/>
            <person name="Ranby S.A."/>
            <person name="Rice C.M."/>
            <person name="Ross M.T."/>
            <person name="Searle S.M."/>
            <person name="Sehra H.K."/>
            <person name="Sheridan E."/>
            <person name="Skuce C.D."/>
            <person name="Smith S."/>
            <person name="Smith M."/>
            <person name="Spraggon L."/>
            <person name="Squares S.L."/>
            <person name="Steward C.A."/>
            <person name="Sycamore N."/>
            <person name="Tamlyn-Hall G."/>
            <person name="Tester J."/>
            <person name="Theaker A.J."/>
            <person name="Thomas D.W."/>
            <person name="Thorpe A."/>
            <person name="Tracey A."/>
            <person name="Tromans A."/>
            <person name="Tubby B."/>
            <person name="Wall M."/>
            <person name="Wallis J.M."/>
            <person name="West A.P."/>
            <person name="White S.S."/>
            <person name="Whitehead S.L."/>
            <person name="Whittaker H."/>
            <person name="Wild A."/>
            <person name="Willey D.J."/>
            <person name="Wilmer T.E."/>
            <person name="Wood J.M."/>
            <person name="Wray P.W."/>
            <person name="Wyatt J.C."/>
            <person name="Young L."/>
            <person name="Younger R.M."/>
            <person name="Bentley D.R."/>
            <person name="Coulson A."/>
            <person name="Durbin R.M."/>
            <person name="Hubbard T."/>
            <person name="Sulston J.E."/>
            <person name="Dunham I."/>
            <person name="Rogers J."/>
            <person name="Beck S."/>
        </authorList>
    </citation>
    <scope>NUCLEOTIDE SEQUENCE [LARGE SCALE GENOMIC DNA]</scope>
</reference>
<reference key="4">
    <citation type="submission" date="2005-07" db="EMBL/GenBank/DDBJ databases">
        <authorList>
            <person name="Mural R.J."/>
            <person name="Istrail S."/>
            <person name="Sutton G.G."/>
            <person name="Florea L."/>
            <person name="Halpern A.L."/>
            <person name="Mobarry C.M."/>
            <person name="Lippert R."/>
            <person name="Walenz B."/>
            <person name="Shatkay H."/>
            <person name="Dew I."/>
            <person name="Miller J.R."/>
            <person name="Flanigan M.J."/>
            <person name="Edwards N.J."/>
            <person name="Bolanos R."/>
            <person name="Fasulo D."/>
            <person name="Halldorsson B.V."/>
            <person name="Hannenhalli S."/>
            <person name="Turner R."/>
            <person name="Yooseph S."/>
            <person name="Lu F."/>
            <person name="Nusskern D.R."/>
            <person name="Shue B.C."/>
            <person name="Zheng X.H."/>
            <person name="Zhong F."/>
            <person name="Delcher A.L."/>
            <person name="Huson D.H."/>
            <person name="Kravitz S.A."/>
            <person name="Mouchard L."/>
            <person name="Reinert K."/>
            <person name="Remington K.A."/>
            <person name="Clark A.G."/>
            <person name="Waterman M.S."/>
            <person name="Eichler E.E."/>
            <person name="Adams M.D."/>
            <person name="Hunkapiller M.W."/>
            <person name="Myers E.W."/>
            <person name="Venter J.C."/>
        </authorList>
    </citation>
    <scope>NUCLEOTIDE SEQUENCE [LARGE SCALE GENOMIC DNA]</scope>
</reference>
<reference key="5">
    <citation type="journal article" date="2004" name="Genome Res.">
        <title>The status, quality, and expansion of the NIH full-length cDNA project: the Mammalian Gene Collection (MGC).</title>
        <authorList>
            <consortium name="The MGC Project Team"/>
        </authorList>
    </citation>
    <scope>NUCLEOTIDE SEQUENCE [LARGE SCALE MRNA] (ISOFORM 1)</scope>
    <source>
        <tissue>Brain</tissue>
        <tissue>Colon</tissue>
    </source>
</reference>
<reference key="6">
    <citation type="journal article" date="2007" name="BMC Genomics">
        <title>The full-ORF clone resource of the German cDNA consortium.</title>
        <authorList>
            <person name="Bechtel S."/>
            <person name="Rosenfelder H."/>
            <person name="Duda A."/>
            <person name="Schmidt C.P."/>
            <person name="Ernst U."/>
            <person name="Wellenreuther R."/>
            <person name="Mehrle A."/>
            <person name="Schuster C."/>
            <person name="Bahr A."/>
            <person name="Bloecker H."/>
            <person name="Heubner D."/>
            <person name="Hoerlein A."/>
            <person name="Michel G."/>
            <person name="Wedler H."/>
            <person name="Koehrer K."/>
            <person name="Ottenwaelder B."/>
            <person name="Poustka A."/>
            <person name="Wiemann S."/>
            <person name="Schupp I."/>
        </authorList>
    </citation>
    <scope>NUCLEOTIDE SEQUENCE [LARGE SCALE MRNA] OF 255-723 (ISOFORM 1)</scope>
    <source>
        <tissue>Brain</tissue>
    </source>
</reference>
<reference key="7">
    <citation type="journal article" date="2005" name="Exp. Cell Res.">
        <title>Characterization of the human GARP (Golgi associated retrograde protein) complex.</title>
        <authorList>
            <person name="Liewen H."/>
            <person name="Meinhold-Heerlein I."/>
            <person name="Oliveira V."/>
            <person name="Schwarzenbacher R."/>
            <person name="Luo G."/>
            <person name="Wadle A."/>
            <person name="Jung M."/>
            <person name="Pfreundschuh M."/>
            <person name="Stenner-Liewen F."/>
        </authorList>
    </citation>
    <scope>FUNCTION</scope>
    <scope>SUBUNIT</scope>
    <scope>SUBCELLULAR LOCATION</scope>
    <scope>INTERACTION WITH RAB6A AND STX10</scope>
</reference>
<reference key="8">
    <citation type="journal article" date="2008" name="Mol. Biol. Cell">
        <title>Requirement of the human GARP complex for mannose 6-phosphate-receptor-dependent sorting of cathepsin D to lysosomes.</title>
        <authorList>
            <person name="Perez-Victoria F.J."/>
            <person name="Mardones G.A."/>
            <person name="Bonifacino J.S."/>
        </authorList>
    </citation>
    <scope>FUNCTION</scope>
    <scope>SUBCELLULAR LOCATION</scope>
</reference>
<reference key="9">
    <citation type="journal article" date="2010" name="Mol. Biol. Cell">
        <title>Ang2/fat-free is a conserved subunit of the Golgi-associated retrograde protein complex.</title>
        <authorList>
            <person name="Perez-Victoria F.J."/>
            <person name="Schindler C."/>
            <person name="Magadan J.G."/>
            <person name="Mardones G.A."/>
            <person name="Delevoye C."/>
            <person name="Romao M."/>
            <person name="Raposo G."/>
            <person name="Bonifacino J.S."/>
        </authorList>
    </citation>
    <scope>INTERACTION WITH VPS51</scope>
</reference>
<reference key="10">
    <citation type="journal article" date="2010" name="Traffic">
        <title>A novel syntaxin 6-interacting protein, SHIP164, regulates syntaxin 6-dependent sorting from early endosomes.</title>
        <authorList>
            <person name="Otto G.P."/>
            <person name="Razi M."/>
            <person name="Morvan J."/>
            <person name="Stenner F."/>
            <person name="Tooze S.A."/>
        </authorList>
    </citation>
    <scope>INTERACTION WITH BLTP3B</scope>
</reference>
<reference key="11">
    <citation type="journal article" date="2011" name="BMC Syst. Biol.">
        <title>Initial characterization of the human central proteome.</title>
        <authorList>
            <person name="Burkard T.R."/>
            <person name="Planyavsky M."/>
            <person name="Kaupe I."/>
            <person name="Breitwieser F.P."/>
            <person name="Buerckstuemmer T."/>
            <person name="Bennett K.L."/>
            <person name="Superti-Furga G."/>
            <person name="Colinge J."/>
        </authorList>
    </citation>
    <scope>IDENTIFICATION BY MASS SPECTROMETRY [LARGE SCALE ANALYSIS]</scope>
</reference>
<reference key="12">
    <citation type="journal article" date="2012" name="Mol. Cell. Proteomics">
        <title>Comparative large-scale characterisation of plant vs. mammal proteins reveals similar and idiosyncratic N-alpha acetylation features.</title>
        <authorList>
            <person name="Bienvenut W.V."/>
            <person name="Sumpton D."/>
            <person name="Martinez A."/>
            <person name="Lilla S."/>
            <person name="Espagne C."/>
            <person name="Meinnel T."/>
            <person name="Giglione C."/>
        </authorList>
    </citation>
    <scope>ACETYLATION [LARGE SCALE ANALYSIS] AT ALA-2</scope>
    <scope>CLEAVAGE OF INITIATOR METHIONINE [LARGE SCALE ANALYSIS]</scope>
    <scope>IDENTIFICATION BY MASS SPECTROMETRY [LARGE SCALE ANALYSIS]</scope>
</reference>
<reference key="13">
    <citation type="journal article" date="2012" name="Proc. Natl. Acad. Sci. U.S.A.">
        <title>N-terminal acetylome analyses and functional insights of the N-terminal acetyltransferase NatB.</title>
        <authorList>
            <person name="Van Damme P."/>
            <person name="Lasa M."/>
            <person name="Polevoda B."/>
            <person name="Gazquez C."/>
            <person name="Elosegui-Artola A."/>
            <person name="Kim D.S."/>
            <person name="De Juan-Pardo E."/>
            <person name="Demeyer K."/>
            <person name="Hole K."/>
            <person name="Larrea E."/>
            <person name="Timmerman E."/>
            <person name="Prieto J."/>
            <person name="Arnesen T."/>
            <person name="Sherman F."/>
            <person name="Gevaert K."/>
            <person name="Aldabe R."/>
        </authorList>
    </citation>
    <scope>ACETYLATION [LARGE SCALE ANALYSIS] AT ALA-2</scope>
    <scope>CLEAVAGE OF INITIATOR METHIONINE [LARGE SCALE ANALYSIS]</scope>
    <scope>IDENTIFICATION BY MASS SPECTROMETRY [LARGE SCALE ANALYSIS]</scope>
</reference>
<reference key="14">
    <citation type="journal article" date="2013" name="J. Proteome Res.">
        <title>Toward a comprehensive characterization of a human cancer cell phosphoproteome.</title>
        <authorList>
            <person name="Zhou H."/>
            <person name="Di Palma S."/>
            <person name="Preisinger C."/>
            <person name="Peng M."/>
            <person name="Polat A.N."/>
            <person name="Heck A.J."/>
            <person name="Mohammed S."/>
        </authorList>
    </citation>
    <scope>PHOSPHORYLATION [LARGE SCALE ANALYSIS] AT SER-355</scope>
    <scope>IDENTIFICATION BY MASS SPECTROMETRY [LARGE SCALE ANALYSIS]</scope>
    <source>
        <tissue>Erythroleukemia</tissue>
    </source>
</reference>
<reference key="15">
    <citation type="journal article" date="2015" name="Nat. Cell Biol.">
        <title>EARP is a multisubunit tethering complex involved in endocytic recycling.</title>
        <authorList>
            <person name="Schindler C."/>
            <person name="Chen Y."/>
            <person name="Pu J."/>
            <person name="Guo X."/>
            <person name="Bonifacino J.S."/>
        </authorList>
    </citation>
    <scope>FUNCTION</scope>
    <scope>SUBCELLULAR LOCATION</scope>
    <scope>IDENTIFICATION IN THE EARP COMPLEX</scope>
</reference>
<reference key="16">
    <citation type="journal article" date="2016" name="Mol. Biol. Cell">
        <title>TSSC1 is novel component of the endosomal retrieval machinery.</title>
        <authorList>
            <person name="Gershlick D.C."/>
            <person name="Schindler C."/>
            <person name="Chen Y."/>
            <person name="Bonifacino J.S."/>
        </authorList>
    </citation>
    <scope>INTERACTION WITH EIPR1</scope>
    <scope>IDENTIFICATION IN THE EARP COMPLEX</scope>
    <scope>IDENTIFICATION IN THE GARP COMPLEX</scope>
</reference>
<feature type="initiator methionine" description="Removed" evidence="10 11">
    <location>
        <position position="1"/>
    </location>
</feature>
<feature type="chain" id="PRO_0000213315" description="Vacuolar protein sorting-associated protein 52 homolog">
    <location>
        <begin position="2"/>
        <end position="723"/>
    </location>
</feature>
<feature type="coiled-coil region" evidence="1">
    <location>
        <begin position="107"/>
        <end position="127"/>
    </location>
</feature>
<feature type="coiled-coil region" evidence="1">
    <location>
        <begin position="194"/>
        <end position="215"/>
    </location>
</feature>
<feature type="modified residue" description="N-acetylalanine" evidence="10 11">
    <location>
        <position position="2"/>
    </location>
</feature>
<feature type="modified residue" description="Phosphoserine" evidence="12">
    <location>
        <position position="355"/>
    </location>
</feature>
<feature type="splice variant" id="VSP_056476" description="In isoform 2." evidence="8">
    <location>
        <begin position="1"/>
        <end position="125"/>
    </location>
</feature>
<feature type="sequence conflict" description="In Ref. 2; BAD96587." evidence="9" ref="2">
    <original>H</original>
    <variation>P</variation>
    <location>
        <position position="710"/>
    </location>
</feature>